<dbReference type="EMBL" id="CP001635">
    <property type="protein sequence ID" value="ACS19138.1"/>
    <property type="molecule type" value="Genomic_DNA"/>
</dbReference>
<dbReference type="SMR" id="C5CJT5"/>
<dbReference type="STRING" id="543728.Vapar_2512"/>
<dbReference type="KEGG" id="vap:Vapar_2512"/>
<dbReference type="eggNOG" id="COG1219">
    <property type="taxonomic scope" value="Bacteria"/>
</dbReference>
<dbReference type="HOGENOM" id="CLU_014218_8_2_4"/>
<dbReference type="OrthoDB" id="9804062at2"/>
<dbReference type="GO" id="GO:0009376">
    <property type="term" value="C:HslUV protease complex"/>
    <property type="evidence" value="ECO:0007669"/>
    <property type="project" value="TreeGrafter"/>
</dbReference>
<dbReference type="GO" id="GO:0005524">
    <property type="term" value="F:ATP binding"/>
    <property type="evidence" value="ECO:0007669"/>
    <property type="project" value="UniProtKB-UniRule"/>
</dbReference>
<dbReference type="GO" id="GO:0016887">
    <property type="term" value="F:ATP hydrolysis activity"/>
    <property type="evidence" value="ECO:0007669"/>
    <property type="project" value="InterPro"/>
</dbReference>
<dbReference type="GO" id="GO:0140662">
    <property type="term" value="F:ATP-dependent protein folding chaperone"/>
    <property type="evidence" value="ECO:0007669"/>
    <property type="project" value="InterPro"/>
</dbReference>
<dbReference type="GO" id="GO:0046983">
    <property type="term" value="F:protein dimerization activity"/>
    <property type="evidence" value="ECO:0007669"/>
    <property type="project" value="InterPro"/>
</dbReference>
<dbReference type="GO" id="GO:0051082">
    <property type="term" value="F:unfolded protein binding"/>
    <property type="evidence" value="ECO:0007669"/>
    <property type="project" value="UniProtKB-UniRule"/>
</dbReference>
<dbReference type="GO" id="GO:0008270">
    <property type="term" value="F:zinc ion binding"/>
    <property type="evidence" value="ECO:0007669"/>
    <property type="project" value="InterPro"/>
</dbReference>
<dbReference type="GO" id="GO:0051301">
    <property type="term" value="P:cell division"/>
    <property type="evidence" value="ECO:0007669"/>
    <property type="project" value="TreeGrafter"/>
</dbReference>
<dbReference type="GO" id="GO:0051603">
    <property type="term" value="P:proteolysis involved in protein catabolic process"/>
    <property type="evidence" value="ECO:0007669"/>
    <property type="project" value="TreeGrafter"/>
</dbReference>
<dbReference type="CDD" id="cd19497">
    <property type="entry name" value="RecA-like_ClpX"/>
    <property type="match status" value="1"/>
</dbReference>
<dbReference type="FunFam" id="1.10.8.60:FF:000002">
    <property type="entry name" value="ATP-dependent Clp protease ATP-binding subunit ClpX"/>
    <property type="match status" value="1"/>
</dbReference>
<dbReference type="FunFam" id="3.40.50.300:FF:000005">
    <property type="entry name" value="ATP-dependent Clp protease ATP-binding subunit ClpX"/>
    <property type="match status" value="1"/>
</dbReference>
<dbReference type="Gene3D" id="1.10.8.60">
    <property type="match status" value="1"/>
</dbReference>
<dbReference type="Gene3D" id="6.20.220.10">
    <property type="entry name" value="ClpX chaperone, C4-type zinc finger domain"/>
    <property type="match status" value="1"/>
</dbReference>
<dbReference type="Gene3D" id="3.40.50.300">
    <property type="entry name" value="P-loop containing nucleotide triphosphate hydrolases"/>
    <property type="match status" value="1"/>
</dbReference>
<dbReference type="HAMAP" id="MF_00175">
    <property type="entry name" value="ClpX"/>
    <property type="match status" value="1"/>
</dbReference>
<dbReference type="InterPro" id="IPR003593">
    <property type="entry name" value="AAA+_ATPase"/>
</dbReference>
<dbReference type="InterPro" id="IPR050052">
    <property type="entry name" value="ATP-dep_Clp_protease_ClpX"/>
</dbReference>
<dbReference type="InterPro" id="IPR003959">
    <property type="entry name" value="ATPase_AAA_core"/>
</dbReference>
<dbReference type="InterPro" id="IPR019489">
    <property type="entry name" value="Clp_ATPase_C"/>
</dbReference>
<dbReference type="InterPro" id="IPR004487">
    <property type="entry name" value="Clp_protease_ATP-bd_su_ClpX"/>
</dbReference>
<dbReference type="InterPro" id="IPR046425">
    <property type="entry name" value="ClpX_bact"/>
</dbReference>
<dbReference type="InterPro" id="IPR027417">
    <property type="entry name" value="P-loop_NTPase"/>
</dbReference>
<dbReference type="InterPro" id="IPR010603">
    <property type="entry name" value="Znf_CppX_C4"/>
</dbReference>
<dbReference type="InterPro" id="IPR038366">
    <property type="entry name" value="Znf_CppX_C4_sf"/>
</dbReference>
<dbReference type="NCBIfam" id="TIGR00382">
    <property type="entry name" value="clpX"/>
    <property type="match status" value="1"/>
</dbReference>
<dbReference type="NCBIfam" id="NF003745">
    <property type="entry name" value="PRK05342.1"/>
    <property type="match status" value="1"/>
</dbReference>
<dbReference type="PANTHER" id="PTHR48102:SF7">
    <property type="entry name" value="ATP-DEPENDENT CLP PROTEASE ATP-BINDING SUBUNIT CLPX-LIKE, MITOCHONDRIAL"/>
    <property type="match status" value="1"/>
</dbReference>
<dbReference type="PANTHER" id="PTHR48102">
    <property type="entry name" value="ATP-DEPENDENT CLP PROTEASE ATP-BINDING SUBUNIT CLPX-LIKE, MITOCHONDRIAL-RELATED"/>
    <property type="match status" value="1"/>
</dbReference>
<dbReference type="Pfam" id="PF07724">
    <property type="entry name" value="AAA_2"/>
    <property type="match status" value="1"/>
</dbReference>
<dbReference type="Pfam" id="PF10431">
    <property type="entry name" value="ClpB_D2-small"/>
    <property type="match status" value="1"/>
</dbReference>
<dbReference type="Pfam" id="PF06689">
    <property type="entry name" value="zf-C4_ClpX"/>
    <property type="match status" value="1"/>
</dbReference>
<dbReference type="SMART" id="SM00382">
    <property type="entry name" value="AAA"/>
    <property type="match status" value="1"/>
</dbReference>
<dbReference type="SMART" id="SM01086">
    <property type="entry name" value="ClpB_D2-small"/>
    <property type="match status" value="1"/>
</dbReference>
<dbReference type="SMART" id="SM00994">
    <property type="entry name" value="zf-C4_ClpX"/>
    <property type="match status" value="1"/>
</dbReference>
<dbReference type="SUPFAM" id="SSF57716">
    <property type="entry name" value="Glucocorticoid receptor-like (DNA-binding domain)"/>
    <property type="match status" value="1"/>
</dbReference>
<dbReference type="SUPFAM" id="SSF52540">
    <property type="entry name" value="P-loop containing nucleoside triphosphate hydrolases"/>
    <property type="match status" value="1"/>
</dbReference>
<dbReference type="PROSITE" id="PS51902">
    <property type="entry name" value="CLPX_ZB"/>
    <property type="match status" value="1"/>
</dbReference>
<protein>
    <recommendedName>
        <fullName evidence="1">ATP-dependent Clp protease ATP-binding subunit ClpX</fullName>
    </recommendedName>
</protein>
<gene>
    <name evidence="1" type="primary">clpX</name>
    <name type="ordered locus">Vapar_2512</name>
</gene>
<accession>C5CJT5</accession>
<organism>
    <name type="scientific">Variovorax paradoxus (strain S110)</name>
    <dbReference type="NCBI Taxonomy" id="543728"/>
    <lineage>
        <taxon>Bacteria</taxon>
        <taxon>Pseudomonadati</taxon>
        <taxon>Pseudomonadota</taxon>
        <taxon>Betaproteobacteria</taxon>
        <taxon>Burkholderiales</taxon>
        <taxon>Comamonadaceae</taxon>
        <taxon>Variovorax</taxon>
    </lineage>
</organism>
<name>CLPX_VARPS</name>
<reference key="1">
    <citation type="journal article" date="2011" name="J. Bacteriol.">
        <title>Complete genome sequence of the metabolically versatile plant growth-promoting endophyte, Variovorax paradoxus S110.</title>
        <authorList>
            <person name="Han J.I."/>
            <person name="Choi H.K."/>
            <person name="Lee S.W."/>
            <person name="Orwin P.M."/>
            <person name="Kim J."/>
            <person name="Laroe S.L."/>
            <person name="Kim T.G."/>
            <person name="O'Neil J."/>
            <person name="Leadbetter J.R."/>
            <person name="Lee S.Y."/>
            <person name="Hur C.G."/>
            <person name="Spain J.C."/>
            <person name="Ovchinnikova G."/>
            <person name="Goodwin L."/>
            <person name="Han C."/>
        </authorList>
    </citation>
    <scope>NUCLEOTIDE SEQUENCE [LARGE SCALE GENOMIC DNA]</scope>
    <source>
        <strain>S110</strain>
    </source>
</reference>
<comment type="function">
    <text evidence="1">ATP-dependent specificity component of the Clp protease. It directs the protease to specific substrates. Can perform chaperone functions in the absence of ClpP.</text>
</comment>
<comment type="subunit">
    <text evidence="1">Component of the ClpX-ClpP complex. Forms a hexameric ring that, in the presence of ATP, binds to fourteen ClpP subunits assembled into a disk-like structure with a central cavity, resembling the structure of eukaryotic proteasomes.</text>
</comment>
<comment type="similarity">
    <text evidence="1">Belongs to the ClpX chaperone family.</text>
</comment>
<evidence type="ECO:0000255" key="1">
    <source>
        <dbReference type="HAMAP-Rule" id="MF_00175"/>
    </source>
</evidence>
<evidence type="ECO:0000255" key="2">
    <source>
        <dbReference type="PROSITE-ProRule" id="PRU01250"/>
    </source>
</evidence>
<sequence length="421" mass="46222">MAEKKGSSSEKTLYCSFCGKSQHEVKKLIAGPSVFICDECIDLCNEIIRDELPAGEEAREARSDLPTPLEIKTNLDNYVIGQEPAKRMLSVAVYNHYKRLRHKEKAKGDDVELSKSNILLIGPTGSGKTLLAQTLARMLDVPFVMADATTLTEAGYVGEDVENIIQKLLQSCNYEVERAQRGIVYIDEIDKISRKSDNPSITRDVSGEGVQQALLKLIEGTMASVPPQGGRKHPNQDFLQIDTTNILFICGGAFAGLEKVIENRTEASGIGFGASVKSKAQRSITEVFREVEPEDLIKFGLIPELVGRMPVVASLAELSEDALVQILTEPKNAVVKQFTKLLQMEGVDLEIRPAALKAIARKALARKTGARGLRSILEQSLIDTMFELPNATNVDKVVVEESTIDENKPPLLVYREAAKKA</sequence>
<feature type="chain" id="PRO_1000203746" description="ATP-dependent Clp protease ATP-binding subunit ClpX">
    <location>
        <begin position="1"/>
        <end position="421"/>
    </location>
</feature>
<feature type="domain" description="ClpX-type ZB" evidence="2">
    <location>
        <begin position="3"/>
        <end position="56"/>
    </location>
</feature>
<feature type="binding site" evidence="2">
    <location>
        <position position="15"/>
    </location>
    <ligand>
        <name>Zn(2+)</name>
        <dbReference type="ChEBI" id="CHEBI:29105"/>
    </ligand>
</feature>
<feature type="binding site" evidence="2">
    <location>
        <position position="18"/>
    </location>
    <ligand>
        <name>Zn(2+)</name>
        <dbReference type="ChEBI" id="CHEBI:29105"/>
    </ligand>
</feature>
<feature type="binding site" evidence="2">
    <location>
        <position position="37"/>
    </location>
    <ligand>
        <name>Zn(2+)</name>
        <dbReference type="ChEBI" id="CHEBI:29105"/>
    </ligand>
</feature>
<feature type="binding site" evidence="2">
    <location>
        <position position="40"/>
    </location>
    <ligand>
        <name>Zn(2+)</name>
        <dbReference type="ChEBI" id="CHEBI:29105"/>
    </ligand>
</feature>
<feature type="binding site" evidence="1">
    <location>
        <begin position="123"/>
        <end position="130"/>
    </location>
    <ligand>
        <name>ATP</name>
        <dbReference type="ChEBI" id="CHEBI:30616"/>
    </ligand>
</feature>
<keyword id="KW-0067">ATP-binding</keyword>
<keyword id="KW-0143">Chaperone</keyword>
<keyword id="KW-0479">Metal-binding</keyword>
<keyword id="KW-0547">Nucleotide-binding</keyword>
<keyword id="KW-0862">Zinc</keyword>
<proteinExistence type="inferred from homology"/>